<proteinExistence type="inferred from homology"/>
<organism>
    <name type="scientific">Helicobacter pylori (strain Shi470)</name>
    <dbReference type="NCBI Taxonomy" id="512562"/>
    <lineage>
        <taxon>Bacteria</taxon>
        <taxon>Pseudomonadati</taxon>
        <taxon>Campylobacterota</taxon>
        <taxon>Epsilonproteobacteria</taxon>
        <taxon>Campylobacterales</taxon>
        <taxon>Helicobacteraceae</taxon>
        <taxon>Helicobacter</taxon>
    </lineage>
</organism>
<sequence>MQDFSSLLLKLQEYWKNQGCLVIQPYDIPAGAGTFHPATLLRSLDKKPWNVAYVAPSRRPTDGRYGENPNRLGSYYQFQVVIKPSPSNIQELYLKSLEVLGINLKEHDIRFVEDNWESPTLGAWGLGWEVWLDGMEVTQFTYFQQVGGIACNPIPVEITYGLERLAMYVQKVENILEIEWAKKNHDSVNYAQVHLESEYEFSKYHFEIASVKRLLEMFKNAQAEALHCLENKLPLPAYDFVMLCSHFFNILDARKAISVAERQNYILQIRDLTKGCAILYKEQEEEREERLKNALTKA</sequence>
<protein>
    <recommendedName>
        <fullName evidence="1">Glycine--tRNA ligase alpha subunit</fullName>
        <ecNumber evidence="1">6.1.1.14</ecNumber>
    </recommendedName>
    <alternativeName>
        <fullName evidence="1">Glycyl-tRNA synthetase alpha subunit</fullName>
        <shortName evidence="1">GlyRS</shortName>
    </alternativeName>
</protein>
<feature type="chain" id="PRO_1000101202" description="Glycine--tRNA ligase alpha subunit">
    <location>
        <begin position="1"/>
        <end position="298"/>
    </location>
</feature>
<keyword id="KW-0030">Aminoacyl-tRNA synthetase</keyword>
<keyword id="KW-0067">ATP-binding</keyword>
<keyword id="KW-0963">Cytoplasm</keyword>
<keyword id="KW-0436">Ligase</keyword>
<keyword id="KW-0547">Nucleotide-binding</keyword>
<keyword id="KW-0648">Protein biosynthesis</keyword>
<accession>B2UUA6</accession>
<comment type="catalytic activity">
    <reaction evidence="1">
        <text>tRNA(Gly) + glycine + ATP = glycyl-tRNA(Gly) + AMP + diphosphate</text>
        <dbReference type="Rhea" id="RHEA:16013"/>
        <dbReference type="Rhea" id="RHEA-COMP:9664"/>
        <dbReference type="Rhea" id="RHEA-COMP:9683"/>
        <dbReference type="ChEBI" id="CHEBI:30616"/>
        <dbReference type="ChEBI" id="CHEBI:33019"/>
        <dbReference type="ChEBI" id="CHEBI:57305"/>
        <dbReference type="ChEBI" id="CHEBI:78442"/>
        <dbReference type="ChEBI" id="CHEBI:78522"/>
        <dbReference type="ChEBI" id="CHEBI:456215"/>
        <dbReference type="EC" id="6.1.1.14"/>
    </reaction>
</comment>
<comment type="subunit">
    <text evidence="1">Tetramer of two alpha and two beta subunits.</text>
</comment>
<comment type="subcellular location">
    <subcellularLocation>
        <location evidence="1">Cytoplasm</location>
    </subcellularLocation>
</comment>
<comment type="similarity">
    <text evidence="1">Belongs to the class-II aminoacyl-tRNA synthetase family.</text>
</comment>
<name>SYGA_HELPS</name>
<gene>
    <name evidence="1" type="primary">glyQ</name>
    <name type="ordered locus">HPSH_05060</name>
</gene>
<dbReference type="EC" id="6.1.1.14" evidence="1"/>
<dbReference type="EMBL" id="CP001072">
    <property type="protein sequence ID" value="ACD48438.1"/>
    <property type="molecule type" value="Genomic_DNA"/>
</dbReference>
<dbReference type="RefSeq" id="WP_001150908.1">
    <property type="nucleotide sequence ID" value="NC_010698.2"/>
</dbReference>
<dbReference type="SMR" id="B2UUA6"/>
<dbReference type="KEGG" id="hps:HPSH_05060"/>
<dbReference type="HOGENOM" id="CLU_057066_1_0_7"/>
<dbReference type="GO" id="GO:0005829">
    <property type="term" value="C:cytosol"/>
    <property type="evidence" value="ECO:0007669"/>
    <property type="project" value="TreeGrafter"/>
</dbReference>
<dbReference type="GO" id="GO:0005524">
    <property type="term" value="F:ATP binding"/>
    <property type="evidence" value="ECO:0007669"/>
    <property type="project" value="UniProtKB-UniRule"/>
</dbReference>
<dbReference type="GO" id="GO:0004820">
    <property type="term" value="F:glycine-tRNA ligase activity"/>
    <property type="evidence" value="ECO:0007669"/>
    <property type="project" value="UniProtKB-UniRule"/>
</dbReference>
<dbReference type="GO" id="GO:0006426">
    <property type="term" value="P:glycyl-tRNA aminoacylation"/>
    <property type="evidence" value="ECO:0007669"/>
    <property type="project" value="UniProtKB-UniRule"/>
</dbReference>
<dbReference type="CDD" id="cd00733">
    <property type="entry name" value="GlyRS_alpha_core"/>
    <property type="match status" value="1"/>
</dbReference>
<dbReference type="FunFam" id="3.30.930.10:FF:000006">
    <property type="entry name" value="Glycine--tRNA ligase alpha subunit"/>
    <property type="match status" value="1"/>
</dbReference>
<dbReference type="Gene3D" id="3.30.930.10">
    <property type="entry name" value="Bira Bifunctional Protein, Domain 2"/>
    <property type="match status" value="1"/>
</dbReference>
<dbReference type="Gene3D" id="1.20.58.180">
    <property type="entry name" value="Class II aaRS and biotin synthetases, domain 2"/>
    <property type="match status" value="1"/>
</dbReference>
<dbReference type="HAMAP" id="MF_00254">
    <property type="entry name" value="Gly_tRNA_synth_alpha"/>
    <property type="match status" value="1"/>
</dbReference>
<dbReference type="InterPro" id="IPR045864">
    <property type="entry name" value="aa-tRNA-synth_II/BPL/LPL"/>
</dbReference>
<dbReference type="InterPro" id="IPR006194">
    <property type="entry name" value="Gly-tRNA-synth_heterodimer"/>
</dbReference>
<dbReference type="InterPro" id="IPR002310">
    <property type="entry name" value="Gly-tRNA_ligase_asu"/>
</dbReference>
<dbReference type="NCBIfam" id="TIGR00388">
    <property type="entry name" value="glyQ"/>
    <property type="match status" value="1"/>
</dbReference>
<dbReference type="NCBIfam" id="NF006827">
    <property type="entry name" value="PRK09348.1"/>
    <property type="match status" value="1"/>
</dbReference>
<dbReference type="PANTHER" id="PTHR30075:SF2">
    <property type="entry name" value="GLYCINE--TRNA LIGASE, CHLOROPLASTIC_MITOCHONDRIAL 2"/>
    <property type="match status" value="1"/>
</dbReference>
<dbReference type="PANTHER" id="PTHR30075">
    <property type="entry name" value="GLYCYL-TRNA SYNTHETASE"/>
    <property type="match status" value="1"/>
</dbReference>
<dbReference type="Pfam" id="PF02091">
    <property type="entry name" value="tRNA-synt_2e"/>
    <property type="match status" value="1"/>
</dbReference>
<dbReference type="PRINTS" id="PR01044">
    <property type="entry name" value="TRNASYNTHGA"/>
</dbReference>
<dbReference type="SUPFAM" id="SSF55681">
    <property type="entry name" value="Class II aaRS and biotin synthetases"/>
    <property type="match status" value="1"/>
</dbReference>
<dbReference type="PROSITE" id="PS50861">
    <property type="entry name" value="AA_TRNA_LIGASE_II_GLYAB"/>
    <property type="match status" value="1"/>
</dbReference>
<evidence type="ECO:0000255" key="1">
    <source>
        <dbReference type="HAMAP-Rule" id="MF_00254"/>
    </source>
</evidence>
<reference key="1">
    <citation type="submission" date="2008-05" db="EMBL/GenBank/DDBJ databases">
        <title>Genome sequence of Helicobacter pylori from the remote Amazon: traces of Asian ancestry of the first Americans.</title>
        <authorList>
            <person name="Kersulyte D."/>
            <person name="Kalia A."/>
            <person name="Gilman R.H."/>
            <person name="Berg D.E."/>
        </authorList>
    </citation>
    <scope>NUCLEOTIDE SEQUENCE [LARGE SCALE GENOMIC DNA]</scope>
    <source>
        <strain>Shi470</strain>
    </source>
</reference>